<dbReference type="EMBL" id="Z48618">
    <property type="status" value="NOT_ANNOTATED_CDS"/>
    <property type="molecule type" value="Genomic_DNA"/>
</dbReference>
<dbReference type="EMBL" id="Z72675">
    <property type="protein sequence ID" value="CAA96864.1"/>
    <property type="molecule type" value="Genomic_DNA"/>
</dbReference>
<dbReference type="EMBL" id="AY558503">
    <property type="protein sequence ID" value="AAS56829.1"/>
    <property type="molecule type" value="Genomic_DNA"/>
</dbReference>
<dbReference type="EMBL" id="BK006941">
    <property type="protein sequence ID" value="DAA07959.1"/>
    <property type="molecule type" value="Genomic_DNA"/>
</dbReference>
<dbReference type="PIR" id="S60431">
    <property type="entry name" value="S60431"/>
</dbReference>
<dbReference type="RefSeq" id="NP_011362.3">
    <property type="nucleotide sequence ID" value="NM_001181018.3"/>
</dbReference>
<dbReference type="PDB" id="1N5Z">
    <property type="method" value="X-ray"/>
    <property type="resolution" value="2.70 A"/>
    <property type="chains" value="P/Q=83-96"/>
</dbReference>
<dbReference type="PDB" id="2V1R">
    <property type="method" value="X-ray"/>
    <property type="resolution" value="2.10 A"/>
    <property type="chains" value="P/Q/R=83-96"/>
</dbReference>
<dbReference type="PDBsum" id="1N5Z"/>
<dbReference type="PDBsum" id="2V1R"/>
<dbReference type="SMR" id="P53112"/>
<dbReference type="BioGRID" id="33101">
    <property type="interactions" value="223"/>
</dbReference>
<dbReference type="ComplexPortal" id="CPX-1904">
    <property type="entry name" value="Peroxisomal PEX13-PEX14-PEX17 docking complex"/>
</dbReference>
<dbReference type="DIP" id="DIP-1749N"/>
<dbReference type="ELM" id="P53112"/>
<dbReference type="FunCoup" id="P53112">
    <property type="interactions" value="113"/>
</dbReference>
<dbReference type="IntAct" id="P53112">
    <property type="interactions" value="38"/>
</dbReference>
<dbReference type="MINT" id="P53112"/>
<dbReference type="STRING" id="4932.YGL153W"/>
<dbReference type="TCDB" id="3.A.20.1.5">
    <property type="family name" value="the peroxisomal protein importer (ppi) family"/>
</dbReference>
<dbReference type="iPTMnet" id="P53112"/>
<dbReference type="PaxDb" id="4932-YGL153W"/>
<dbReference type="PeptideAtlas" id="P53112"/>
<dbReference type="EnsemblFungi" id="YGL153W_mRNA">
    <property type="protein sequence ID" value="YGL153W"/>
    <property type="gene ID" value="YGL153W"/>
</dbReference>
<dbReference type="GeneID" id="852724"/>
<dbReference type="KEGG" id="sce:YGL153W"/>
<dbReference type="AGR" id="SGD:S000003121"/>
<dbReference type="SGD" id="S000003121">
    <property type="gene designation" value="PEX14"/>
</dbReference>
<dbReference type="VEuPathDB" id="FungiDB:YGL153W"/>
<dbReference type="eggNOG" id="KOG2629">
    <property type="taxonomic scope" value="Eukaryota"/>
</dbReference>
<dbReference type="GeneTree" id="ENSGT00390000015047"/>
<dbReference type="HOGENOM" id="CLU_045718_0_1_1"/>
<dbReference type="InParanoid" id="P53112"/>
<dbReference type="OMA" id="YGAYEVT"/>
<dbReference type="OrthoDB" id="5549158at2759"/>
<dbReference type="BioCyc" id="YEAST:G3O-30644-MONOMER"/>
<dbReference type="Reactome" id="R-SCE-8866654">
    <property type="pathway name" value="E3 ubiquitin ligases ubiquitinate target proteins"/>
</dbReference>
<dbReference type="Reactome" id="R-SCE-9033241">
    <property type="pathway name" value="Peroxisomal protein import"/>
</dbReference>
<dbReference type="Reactome" id="R-SCE-9603798">
    <property type="pathway name" value="Class I peroxisomal membrane protein import"/>
</dbReference>
<dbReference type="BioGRID-ORCS" id="852724">
    <property type="hits" value="0 hits in 10 CRISPR screens"/>
</dbReference>
<dbReference type="EvolutionaryTrace" id="P53112"/>
<dbReference type="PRO" id="PR:P53112"/>
<dbReference type="Proteomes" id="UP000002311">
    <property type="component" value="Chromosome VII"/>
</dbReference>
<dbReference type="RNAct" id="P53112">
    <property type="molecule type" value="protein"/>
</dbReference>
<dbReference type="GO" id="GO:1990429">
    <property type="term" value="C:peroxisomal importomer complex"/>
    <property type="evidence" value="ECO:0000314"/>
    <property type="project" value="SGD"/>
</dbReference>
<dbReference type="GO" id="GO:0005778">
    <property type="term" value="C:peroxisomal membrane"/>
    <property type="evidence" value="ECO:0000314"/>
    <property type="project" value="ComplexPortal"/>
</dbReference>
<dbReference type="GO" id="GO:1902495">
    <property type="term" value="C:transmembrane transporter complex"/>
    <property type="evidence" value="ECO:0000314"/>
    <property type="project" value="UniProt"/>
</dbReference>
<dbReference type="GO" id="GO:0008320">
    <property type="term" value="F:protein transmembrane transporter activity"/>
    <property type="evidence" value="ECO:0000314"/>
    <property type="project" value="UniProtKB"/>
</dbReference>
<dbReference type="GO" id="GO:0030674">
    <property type="term" value="F:protein-macromolecule adaptor activity"/>
    <property type="evidence" value="ECO:0000314"/>
    <property type="project" value="UniProtKB"/>
</dbReference>
<dbReference type="GO" id="GO:0005102">
    <property type="term" value="F:signaling receptor binding"/>
    <property type="evidence" value="ECO:0000318"/>
    <property type="project" value="GO_Central"/>
</dbReference>
<dbReference type="GO" id="GO:0016560">
    <property type="term" value="P:protein import into peroxisome matrix, docking"/>
    <property type="evidence" value="ECO:0000314"/>
    <property type="project" value="UniProtKB"/>
</dbReference>
<dbReference type="FunFam" id="1.10.10.10:FF:000547">
    <property type="entry name" value="Peroxisomal membrane protein PEX14"/>
    <property type="match status" value="1"/>
</dbReference>
<dbReference type="Gene3D" id="1.10.10.10">
    <property type="entry name" value="Winged helix-like DNA-binding domain superfamily/Winged helix DNA-binding domain"/>
    <property type="match status" value="1"/>
</dbReference>
<dbReference type="InterPro" id="IPR025655">
    <property type="entry name" value="PEX14"/>
</dbReference>
<dbReference type="InterPro" id="IPR006785">
    <property type="entry name" value="Pex14_N"/>
</dbReference>
<dbReference type="InterPro" id="IPR036388">
    <property type="entry name" value="WH-like_DNA-bd_sf"/>
</dbReference>
<dbReference type="PANTHER" id="PTHR23058">
    <property type="entry name" value="PEROXISOMAL MEMBRANE PROTEIN PEX14"/>
    <property type="match status" value="1"/>
</dbReference>
<dbReference type="PANTHER" id="PTHR23058:SF0">
    <property type="entry name" value="PEROXISOMAL MEMBRANE PROTEIN PEX14"/>
    <property type="match status" value="1"/>
</dbReference>
<dbReference type="Pfam" id="PF04695">
    <property type="entry name" value="Pex14_N"/>
    <property type="match status" value="1"/>
</dbReference>
<gene>
    <name evidence="8 10" type="primary">PEX14</name>
    <name type="ordered locus">YGL153W</name>
    <name type="ORF">G1870</name>
</gene>
<name>PEX14_YEAST</name>
<reference key="1">
    <citation type="journal article" date="1995" name="Yeast">
        <title>DNA sequence analysis of a 35 kb segment from Saccharomyces cerevisiae chromosome VII reveals 19 open reading frames including RAD54, ACE1/CUP2, PMR1, RCK1, AMS1 and CAL1/CDC43.</title>
        <authorList>
            <person name="James C.M."/>
            <person name="Indge K.J."/>
            <person name="Oliver S.G."/>
        </authorList>
    </citation>
    <scope>NUCLEOTIDE SEQUENCE [GENOMIC DNA]</scope>
</reference>
<reference key="2">
    <citation type="journal article" date="1997" name="Nature">
        <title>The nucleotide sequence of Saccharomyces cerevisiae chromosome VII.</title>
        <authorList>
            <person name="Tettelin H."/>
            <person name="Agostoni-Carbone M.L."/>
            <person name="Albermann K."/>
            <person name="Albers M."/>
            <person name="Arroyo J."/>
            <person name="Backes U."/>
            <person name="Barreiros T."/>
            <person name="Bertani I."/>
            <person name="Bjourson A.J."/>
            <person name="Brueckner M."/>
            <person name="Bruschi C.V."/>
            <person name="Carignani G."/>
            <person name="Castagnoli L."/>
            <person name="Cerdan E."/>
            <person name="Clemente M.L."/>
            <person name="Coblenz A."/>
            <person name="Coglievina M."/>
            <person name="Coissac E."/>
            <person name="Defoor E."/>
            <person name="Del Bino S."/>
            <person name="Delius H."/>
            <person name="Delneri D."/>
            <person name="de Wergifosse P."/>
            <person name="Dujon B."/>
            <person name="Durand P."/>
            <person name="Entian K.-D."/>
            <person name="Eraso P."/>
            <person name="Escribano V."/>
            <person name="Fabiani L."/>
            <person name="Fartmann B."/>
            <person name="Feroli F."/>
            <person name="Feuermann M."/>
            <person name="Frontali L."/>
            <person name="Garcia-Gonzalez M."/>
            <person name="Garcia-Saez M.I."/>
            <person name="Goffeau A."/>
            <person name="Guerreiro P."/>
            <person name="Hani J."/>
            <person name="Hansen M."/>
            <person name="Hebling U."/>
            <person name="Hernandez K."/>
            <person name="Heumann K."/>
            <person name="Hilger F."/>
            <person name="Hofmann B."/>
            <person name="Indge K.J."/>
            <person name="James C.M."/>
            <person name="Klima R."/>
            <person name="Koetter P."/>
            <person name="Kramer B."/>
            <person name="Kramer W."/>
            <person name="Lauquin G."/>
            <person name="Leuther H."/>
            <person name="Louis E.J."/>
            <person name="Maillier E."/>
            <person name="Marconi A."/>
            <person name="Martegani E."/>
            <person name="Mazon M.J."/>
            <person name="Mazzoni C."/>
            <person name="McReynolds A.D.K."/>
            <person name="Melchioretto P."/>
            <person name="Mewes H.-W."/>
            <person name="Minenkova O."/>
            <person name="Mueller-Auer S."/>
            <person name="Nawrocki A."/>
            <person name="Netter P."/>
            <person name="Neu R."/>
            <person name="Nombela C."/>
            <person name="Oliver S.G."/>
            <person name="Panzeri L."/>
            <person name="Paoluzi S."/>
            <person name="Plevani P."/>
            <person name="Portetelle D."/>
            <person name="Portillo F."/>
            <person name="Potier S."/>
            <person name="Purnelle B."/>
            <person name="Rieger M."/>
            <person name="Riles L."/>
            <person name="Rinaldi T."/>
            <person name="Robben J."/>
            <person name="Rodrigues-Pousada C."/>
            <person name="Rodriguez-Belmonte E."/>
            <person name="Rodriguez-Torres A.M."/>
            <person name="Rose M."/>
            <person name="Ruzzi M."/>
            <person name="Saliola M."/>
            <person name="Sanchez-Perez M."/>
            <person name="Schaefer B."/>
            <person name="Schaefer M."/>
            <person name="Scharfe M."/>
            <person name="Schmidheini T."/>
            <person name="Schreer A."/>
            <person name="Skala J."/>
            <person name="Souciet J.-L."/>
            <person name="Steensma H.Y."/>
            <person name="Talla E."/>
            <person name="Thierry A."/>
            <person name="Vandenbol M."/>
            <person name="van der Aart Q.J.M."/>
            <person name="Van Dyck L."/>
            <person name="Vanoni M."/>
            <person name="Verhasselt P."/>
            <person name="Voet M."/>
            <person name="Volckaert G."/>
            <person name="Wambutt R."/>
            <person name="Watson M.D."/>
            <person name="Weber N."/>
            <person name="Wedler E."/>
            <person name="Wedler H."/>
            <person name="Wipfli P."/>
            <person name="Wolf K."/>
            <person name="Wright L.F."/>
            <person name="Zaccaria P."/>
            <person name="Zimmermann M."/>
            <person name="Zollner A."/>
            <person name="Kleine K."/>
        </authorList>
    </citation>
    <scope>NUCLEOTIDE SEQUENCE [LARGE SCALE GENOMIC DNA]</scope>
    <source>
        <strain>ATCC 204508 / S288c</strain>
    </source>
</reference>
<reference key="3">
    <citation type="journal article" date="2014" name="G3 (Bethesda)">
        <title>The reference genome sequence of Saccharomyces cerevisiae: Then and now.</title>
        <authorList>
            <person name="Engel S.R."/>
            <person name="Dietrich F.S."/>
            <person name="Fisk D.G."/>
            <person name="Binkley G."/>
            <person name="Balakrishnan R."/>
            <person name="Costanzo M.C."/>
            <person name="Dwight S.S."/>
            <person name="Hitz B.C."/>
            <person name="Karra K."/>
            <person name="Nash R.S."/>
            <person name="Weng S."/>
            <person name="Wong E.D."/>
            <person name="Lloyd P."/>
            <person name="Skrzypek M.S."/>
            <person name="Miyasato S.R."/>
            <person name="Simison M."/>
            <person name="Cherry J.M."/>
        </authorList>
    </citation>
    <scope>GENOME REANNOTATION</scope>
    <source>
        <strain>ATCC 204508 / S288c</strain>
    </source>
</reference>
<reference key="4">
    <citation type="journal article" date="2007" name="Genome Res.">
        <title>Approaching a complete repository of sequence-verified protein-encoding clones for Saccharomyces cerevisiae.</title>
        <authorList>
            <person name="Hu Y."/>
            <person name="Rolfs A."/>
            <person name="Bhullar B."/>
            <person name="Murthy T.V.S."/>
            <person name="Zhu C."/>
            <person name="Berger M.F."/>
            <person name="Camargo A.A."/>
            <person name="Kelley F."/>
            <person name="McCarron S."/>
            <person name="Jepson D."/>
            <person name="Richardson A."/>
            <person name="Raphael J."/>
            <person name="Moreira D."/>
            <person name="Taycher E."/>
            <person name="Zuo D."/>
            <person name="Mohr S."/>
            <person name="Kane M.F."/>
            <person name="Williamson J."/>
            <person name="Simpson A.J.G."/>
            <person name="Bulyk M.L."/>
            <person name="Harlow E."/>
            <person name="Marsischky G."/>
            <person name="Kolodner R.D."/>
            <person name="LaBaer J."/>
        </authorList>
    </citation>
    <scope>NUCLEOTIDE SEQUENCE [GENOMIC DNA]</scope>
    <source>
        <strain>ATCC 204508 / S288c</strain>
    </source>
</reference>
<reference key="5">
    <citation type="journal article" date="1997" name="Cell">
        <title>Pex14p, a peroxisomal membrane protein binding both receptors of the two PTS-dependent import pathways.</title>
        <authorList>
            <person name="Albertini M."/>
            <person name="Rehling P."/>
            <person name="Erdmann R."/>
            <person name="Girzalsky W."/>
            <person name="Kiel J.A.K.W."/>
            <person name="Veenhuis M."/>
            <person name="Kunau W.-H."/>
        </authorList>
    </citation>
    <scope>FUNCTION</scope>
    <scope>SUBCELLULAR LOCATION</scope>
    <scope>INTERACTION WITH PEX5 AND PEX7</scope>
</reference>
<reference key="6">
    <citation type="journal article" date="1999" name="J. Cell Biol.">
        <title>Involvement of Pex13p in Pex14p localization and peroxisomal targeting signal 2-dependent protein import into peroxisomes.</title>
        <authorList>
            <person name="Girzalsky W."/>
            <person name="Rehling P."/>
            <person name="Stein K."/>
            <person name="Kipper J."/>
            <person name="Blank L."/>
            <person name="Kunau W.-H."/>
            <person name="Erdmann R."/>
        </authorList>
    </citation>
    <scope>MUTAGENESIS OF 87-PRO--PRO-90</scope>
    <scope>INTERACTION WITH PEX13</scope>
</reference>
<reference key="7">
    <citation type="journal article" date="2003" name="Nature">
        <title>Global analysis of protein expression in yeast.</title>
        <authorList>
            <person name="Ghaemmaghami S."/>
            <person name="Huh W.-K."/>
            <person name="Bower K."/>
            <person name="Howson R.W."/>
            <person name="Belle A."/>
            <person name="Dephoure N."/>
            <person name="O'Shea E.K."/>
            <person name="Weissman J.S."/>
        </authorList>
    </citation>
    <scope>LEVEL OF PROTEIN EXPRESSION [LARGE SCALE ANALYSIS]</scope>
</reference>
<reference key="8">
    <citation type="journal article" date="2008" name="Mol. Cell. Proteomics">
        <title>A multidimensional chromatography technology for in-depth phosphoproteome analysis.</title>
        <authorList>
            <person name="Albuquerque C.P."/>
            <person name="Smolka M.B."/>
            <person name="Payne S.H."/>
            <person name="Bafna V."/>
            <person name="Eng J."/>
            <person name="Zhou H."/>
        </authorList>
    </citation>
    <scope>IDENTIFICATION BY MASS SPECTROMETRY [LARGE SCALE ANALYSIS]</scope>
</reference>
<reference key="9">
    <citation type="journal article" date="2009" name="Science">
        <title>Global analysis of Cdk1 substrate phosphorylation sites provides insights into evolution.</title>
        <authorList>
            <person name="Holt L.J."/>
            <person name="Tuch B.B."/>
            <person name="Villen J."/>
            <person name="Johnson A.D."/>
            <person name="Gygi S.P."/>
            <person name="Morgan D.O."/>
        </authorList>
    </citation>
    <scope>PHOSPHORYLATION [LARGE SCALE ANALYSIS] AT SER-313</scope>
    <scope>IDENTIFICATION BY MASS SPECTROMETRY [LARGE SCALE ANALYSIS]</scope>
</reference>
<reference key="10">
    <citation type="journal article" date="2010" name="Nat. Cell Biol.">
        <title>The peroxisomal importomer constitutes a large and highly dynamic pore.</title>
        <authorList>
            <person name="Meinecke M."/>
            <person name="Cizmowski C."/>
            <person name="Schliebs W."/>
            <person name="Krueger V."/>
            <person name="Beck S."/>
            <person name="Wagner R."/>
            <person name="Erdmann R."/>
        </authorList>
    </citation>
    <scope>FUNCTION</scope>
    <scope>INTERACTION WITH PEX5 AND PEX13</scope>
</reference>
<reference key="11">
    <citation type="journal article" date="2012" name="Proc. Natl. Acad. Sci. U.S.A.">
        <title>N-terminal acetylome analyses and functional insights of the N-terminal acetyltransferase NatB.</title>
        <authorList>
            <person name="Van Damme P."/>
            <person name="Lasa M."/>
            <person name="Polevoda B."/>
            <person name="Gazquez C."/>
            <person name="Elosegui-Artola A."/>
            <person name="Kim D.S."/>
            <person name="De Juan-Pardo E."/>
            <person name="Demeyer K."/>
            <person name="Hole K."/>
            <person name="Larrea E."/>
            <person name="Timmerman E."/>
            <person name="Prieto J."/>
            <person name="Arnesen T."/>
            <person name="Sherman F."/>
            <person name="Gevaert K."/>
            <person name="Aldabe R."/>
        </authorList>
    </citation>
    <scope>ACETYLATION [LARGE SCALE ANALYSIS] AT SER-2</scope>
    <scope>CLEAVAGE OF INITIATOR METHIONINE [LARGE SCALE ANALYSIS]</scope>
    <scope>IDENTIFICATION BY MASS SPECTROMETRY [LARGE SCALE ANALYSIS]</scope>
</reference>
<reference key="12">
    <citation type="journal article" date="2016" name="J. Cell Sci.">
        <title>Pex9p is a new yeast peroxisomal import receptor for PTS1-containing proteins.</title>
        <authorList>
            <person name="Effelsberg D."/>
            <person name="Cruz-Zaragoza L.D."/>
            <person name="Schliebs W."/>
            <person name="Erdmann R."/>
        </authorList>
    </citation>
    <scope>INTERACTION WITH PEX9</scope>
</reference>
<reference evidence="11" key="13">
    <citation type="journal article" date="2002" name="Mol. Cell">
        <title>Topography for independent binding of alpha-helical and PPII-helical ligands to a peroxisomal SH3 domain.</title>
        <authorList>
            <person name="Douangamath A."/>
            <person name="Filipp F.V."/>
            <person name="Klein A.T."/>
            <person name="Barnett P."/>
            <person name="Zou P."/>
            <person name="Voorn-Brouwer T."/>
            <person name="Vega M.C."/>
            <person name="Mayans O.M."/>
            <person name="Sattler M."/>
            <person name="Distel B."/>
            <person name="Wilmanns M."/>
        </authorList>
    </citation>
    <scope>X-RAY CRYSTALLOGRAPHY (2.70 ANGSTROMS) OF 83-96 IN COMPLEX WITH PEX13 SH3 DOMAIN</scope>
</reference>
<reference evidence="12" key="14">
    <citation type="submission" date="2007-05" db="PDB data bank">
        <title>Structural Genomics of Yeast SH3 Domains.</title>
        <authorList>
            <person name="Kursula P."/>
            <person name="Kursula I."/>
            <person name="Pinotsis N."/>
            <person name="Lehmann F."/>
            <person name="Zou P."/>
            <person name="Song Y.H."/>
            <person name="Wilmanns M."/>
        </authorList>
    </citation>
    <scope>X-RAY CRYSTALLOGRAPHY (2.10 ANGSTROMS) OF 83-96</scope>
</reference>
<comment type="function">
    <text evidence="5 7">Component of the PEX13-PEX14 docking complex, a translocon channel that specifically mediates the import of peroxisomal cargo proteins bound to PEX5 or PEX21 receptors (PubMed:20154681, PubMed:9094717). The PEX13-PEX14 docking complex forms a large import pore which can be opened to a diameter of about 9 nm (PubMed:20154681). Mechanistically, PEX5 (or PEX21) receptor along with cargo proteins associates with the PEX14 subunit of the PEX13-PEX14 docking complex in the cytosol, leading to the insertion of the receptor into the organelle membrane with the concomitant translocation of the cargo into the peroxisome matrix (PubMed:20154681).</text>
</comment>
<comment type="subunit">
    <text evidence="2 3 5 6 7">Interacts with PEX13 (via SH3 domain); forming the PEX13-PEX14 docking complex (PubMed:10087260, PubMed:12453410, PubMed:20154681). Interacts with PEX5 (via WxxxF/Y motifs) (PubMed:20154681, PubMed:9094717). Interacts with PEX7 (PubMed:9094717). Interacts with PEX9 (PubMed:27678487).</text>
</comment>
<comment type="interaction">
    <interactant intactId="EBI-13212">
        <id>P53112</id>
    </interactant>
    <interactant intactId="EBI-11946">
        <id>Q06389</id>
        <label>FRQ1</label>
    </interactant>
    <organismsDiffer>false</organismsDiffer>
    <experiments>3</experiments>
</comment>
<comment type="interaction">
    <interactant intactId="EBI-13212">
        <id>P53112</id>
    </interactant>
    <interactant intactId="EBI-13206">
        <id>P80667</id>
        <label>PEX13</label>
    </interactant>
    <organismsDiffer>false</organismsDiffer>
    <experiments>18</experiments>
</comment>
<comment type="interaction">
    <interactant intactId="EBI-13212">
        <id>P53112</id>
    </interactant>
    <interactant intactId="EBI-13218">
        <id>P40155</id>
        <label>PEX17</label>
    </interactant>
    <organismsDiffer>false</organismsDiffer>
    <experiments>15</experiments>
</comment>
<comment type="interaction">
    <interactant intactId="EBI-13212">
        <id>P53112</id>
    </interactant>
    <interactant intactId="EBI-13160">
        <id>P32800</id>
        <label>PEX2</label>
    </interactant>
    <organismsDiffer>false</organismsDiffer>
    <experiments>11</experiments>
</comment>
<comment type="interaction">
    <interactant intactId="EBI-13212">
        <id>P53112</id>
    </interactant>
    <interactant intactId="EBI-13170">
        <id>P35056</id>
        <label>PEX5</label>
    </interactant>
    <organismsDiffer>false</organismsDiffer>
    <experiments>9</experiments>
</comment>
<comment type="interaction">
    <interactant intactId="EBI-13212">
        <id>P53112</id>
    </interactant>
    <interactant intactId="EBI-13178">
        <id>P33760</id>
        <label>PEX6</label>
    </interactant>
    <organismsDiffer>false</organismsDiffer>
    <experiments>6</experiments>
</comment>
<comment type="subcellular location">
    <subcellularLocation>
        <location evidence="7">Peroxisome membrane</location>
        <topology evidence="7">Peripheral membrane protein</topology>
        <orientation evidence="7">Cytoplasmic side</orientation>
    </subcellularLocation>
</comment>
<comment type="miscellaneous">
    <text evidence="4">Present with 2570 molecules/cell in log phase SD medium.</text>
</comment>
<comment type="similarity">
    <text evidence="9">Belongs to the peroxin-14 family.</text>
</comment>
<keyword id="KW-0002">3D-structure</keyword>
<keyword id="KW-0007">Acetylation</keyword>
<keyword id="KW-0472">Membrane</keyword>
<keyword id="KW-0576">Peroxisome</keyword>
<keyword id="KW-0597">Phosphoprotein</keyword>
<keyword id="KW-0653">Protein transport</keyword>
<keyword id="KW-1185">Reference proteome</keyword>
<keyword id="KW-0811">Translocation</keyword>
<keyword id="KW-0813">Transport</keyword>
<evidence type="ECO:0000256" key="1">
    <source>
        <dbReference type="SAM" id="MobiDB-lite"/>
    </source>
</evidence>
<evidence type="ECO:0000269" key="2">
    <source>
    </source>
</evidence>
<evidence type="ECO:0000269" key="3">
    <source>
    </source>
</evidence>
<evidence type="ECO:0000269" key="4">
    <source>
    </source>
</evidence>
<evidence type="ECO:0000269" key="5">
    <source>
    </source>
</evidence>
<evidence type="ECO:0000269" key="6">
    <source>
    </source>
</evidence>
<evidence type="ECO:0000269" key="7">
    <source>
    </source>
</evidence>
<evidence type="ECO:0000303" key="8">
    <source>
    </source>
</evidence>
<evidence type="ECO:0000305" key="9"/>
<evidence type="ECO:0000312" key="10">
    <source>
        <dbReference type="SGD" id="S000003121"/>
    </source>
</evidence>
<evidence type="ECO:0007744" key="11">
    <source>
        <dbReference type="PDB" id="1N5Z"/>
    </source>
</evidence>
<evidence type="ECO:0007744" key="12">
    <source>
        <dbReference type="PDB" id="2V1R"/>
    </source>
</evidence>
<evidence type="ECO:0007744" key="13">
    <source>
    </source>
</evidence>
<evidence type="ECO:0007744" key="14">
    <source>
    </source>
</evidence>
<feature type="initiator methionine" description="Removed" evidence="14">
    <location>
        <position position="1"/>
    </location>
</feature>
<feature type="chain" id="PRO_0000058329" description="Peroxisomal membrane protein PEX14">
    <location>
        <begin position="2"/>
        <end position="341"/>
    </location>
</feature>
<feature type="region of interest" description="Disordered" evidence="1">
    <location>
        <begin position="276"/>
        <end position="341"/>
    </location>
</feature>
<feature type="short sequence motif" description="SH3-binding" evidence="2">
    <location>
        <begin position="86"/>
        <end position="94"/>
    </location>
</feature>
<feature type="compositionally biased region" description="Basic and acidic residues" evidence="1">
    <location>
        <begin position="279"/>
        <end position="295"/>
    </location>
</feature>
<feature type="compositionally biased region" description="Polar residues" evidence="1">
    <location>
        <begin position="308"/>
        <end position="341"/>
    </location>
</feature>
<feature type="modified residue" description="N-acetylserine" evidence="14">
    <location>
        <position position="2"/>
    </location>
</feature>
<feature type="modified residue" description="Phosphoserine" evidence="13">
    <location>
        <position position="313"/>
    </location>
</feature>
<feature type="mutagenesis site" description="Loss of interaction with SH3 domain of PEX13. No effect on membrane association." evidence="2">
    <original>PTLP</original>
    <variation>ATLA</variation>
    <location>
        <begin position="87"/>
        <end position="90"/>
    </location>
</feature>
<accession>P53112</accession>
<accession>D6VTZ8</accession>
<proteinExistence type="evidence at protein level"/>
<organism>
    <name type="scientific">Saccharomyces cerevisiae (strain ATCC 204508 / S288c)</name>
    <name type="common">Baker's yeast</name>
    <dbReference type="NCBI Taxonomy" id="559292"/>
    <lineage>
        <taxon>Eukaryota</taxon>
        <taxon>Fungi</taxon>
        <taxon>Dikarya</taxon>
        <taxon>Ascomycota</taxon>
        <taxon>Saccharomycotina</taxon>
        <taxon>Saccharomycetes</taxon>
        <taxon>Saccharomycetales</taxon>
        <taxon>Saccharomycetaceae</taxon>
        <taxon>Saccharomyces</taxon>
    </lineage>
</organism>
<sequence length="341" mass="38420">MSDVVSKDRKALFDSAVSFLKDESIKDAPLLKKIEFLKSKGLTEKEIEIAMKEPKKDGIVGDEVSKKIGSTENRASQDMYLYEAMPPTLPHRDWKDYFVMATATAGLLYGAYEVTRRYVIPNILPEAKSKLEGDKKEIDDQFSKIDTVLNAIEAEQAEFRKKESETLKELSDTIAELKQALVQTTRSREKIEDEFRIVKLEVVNMQNTIDKFVSDNDGMQELNNIQKEMESLKSLMNNRMESGNAQDNRLFSISPNGIPGIDTIPSASEILAKMGMQEESDKEKENGSDANKDDNAVPAWKKAREQTIDSNASIPEWQKNTAANEISVPDWQNGQVEDSIP</sequence>
<protein>
    <recommendedName>
        <fullName>Peroxisomal membrane protein PEX14</fullName>
    </recommendedName>
    <alternativeName>
        <fullName>Peroxin-14</fullName>
    </alternativeName>
</protein>